<name>CLPS_RHOJR</name>
<dbReference type="EMBL" id="CP000431">
    <property type="protein sequence ID" value="ABG93259.1"/>
    <property type="molecule type" value="Genomic_DNA"/>
</dbReference>
<dbReference type="RefSeq" id="WP_011594453.1">
    <property type="nucleotide sequence ID" value="NC_008268.1"/>
</dbReference>
<dbReference type="SMR" id="Q0SGS7"/>
<dbReference type="KEGG" id="rha:RHA1_ro01441"/>
<dbReference type="PATRIC" id="fig|101510.16.peg.1463"/>
<dbReference type="eggNOG" id="COG2127">
    <property type="taxonomic scope" value="Bacteria"/>
</dbReference>
<dbReference type="HOGENOM" id="CLU_153743_0_0_11"/>
<dbReference type="Proteomes" id="UP000008710">
    <property type="component" value="Chromosome"/>
</dbReference>
<dbReference type="GO" id="GO:0030163">
    <property type="term" value="P:protein catabolic process"/>
    <property type="evidence" value="ECO:0007669"/>
    <property type="project" value="InterPro"/>
</dbReference>
<dbReference type="GO" id="GO:0006508">
    <property type="term" value="P:proteolysis"/>
    <property type="evidence" value="ECO:0007669"/>
    <property type="project" value="UniProtKB-UniRule"/>
</dbReference>
<dbReference type="Gene3D" id="3.30.1390.10">
    <property type="match status" value="1"/>
</dbReference>
<dbReference type="HAMAP" id="MF_00302">
    <property type="entry name" value="ClpS"/>
    <property type="match status" value="1"/>
</dbReference>
<dbReference type="InterPro" id="IPR022935">
    <property type="entry name" value="ClpS"/>
</dbReference>
<dbReference type="InterPro" id="IPR003769">
    <property type="entry name" value="ClpS_core"/>
</dbReference>
<dbReference type="InterPro" id="IPR014719">
    <property type="entry name" value="Ribosomal_bL12_C/ClpS-like"/>
</dbReference>
<dbReference type="NCBIfam" id="NF000668">
    <property type="entry name" value="PRK00033.1-1"/>
    <property type="match status" value="1"/>
</dbReference>
<dbReference type="Pfam" id="PF02617">
    <property type="entry name" value="ClpS"/>
    <property type="match status" value="1"/>
</dbReference>
<dbReference type="SUPFAM" id="SSF54736">
    <property type="entry name" value="ClpS-like"/>
    <property type="match status" value="1"/>
</dbReference>
<evidence type="ECO:0000255" key="1">
    <source>
        <dbReference type="HAMAP-Rule" id="MF_00302"/>
    </source>
</evidence>
<comment type="function">
    <text evidence="1">Involved in the modulation of the specificity of the ClpAP-mediated ATP-dependent protein degradation.</text>
</comment>
<comment type="subunit">
    <text evidence="1">Binds to the N-terminal domain of the chaperone ClpA.</text>
</comment>
<comment type="similarity">
    <text evidence="1">Belongs to the ClpS family.</text>
</comment>
<reference key="1">
    <citation type="journal article" date="2006" name="Proc. Natl. Acad. Sci. U.S.A.">
        <title>The complete genome of Rhodococcus sp. RHA1 provides insights into a catabolic powerhouse.</title>
        <authorList>
            <person name="McLeod M.P."/>
            <person name="Warren R.L."/>
            <person name="Hsiao W.W.L."/>
            <person name="Araki N."/>
            <person name="Myhre M."/>
            <person name="Fernandes C."/>
            <person name="Miyazawa D."/>
            <person name="Wong W."/>
            <person name="Lillquist A.L."/>
            <person name="Wang D."/>
            <person name="Dosanjh M."/>
            <person name="Hara H."/>
            <person name="Petrescu A."/>
            <person name="Morin R.D."/>
            <person name="Yang G."/>
            <person name="Stott J.M."/>
            <person name="Schein J.E."/>
            <person name="Shin H."/>
            <person name="Smailus D."/>
            <person name="Siddiqui A.S."/>
            <person name="Marra M.A."/>
            <person name="Jones S.J.M."/>
            <person name="Holt R."/>
            <person name="Brinkman F.S.L."/>
            <person name="Miyauchi K."/>
            <person name="Fukuda M."/>
            <person name="Davies J.E."/>
            <person name="Mohn W.W."/>
            <person name="Eltis L.D."/>
        </authorList>
    </citation>
    <scope>NUCLEOTIDE SEQUENCE [LARGE SCALE GENOMIC DNA]</scope>
    <source>
        <strain>RHA1</strain>
    </source>
</reference>
<proteinExistence type="inferred from homology"/>
<feature type="chain" id="PRO_0000300722" description="ATP-dependent Clp protease adapter protein ClpS">
    <location>
        <begin position="1"/>
        <end position="112"/>
    </location>
</feature>
<gene>
    <name evidence="1" type="primary">clpS</name>
    <name type="ordered locus">RHA1_ro01441</name>
</gene>
<protein>
    <recommendedName>
        <fullName evidence="1">ATP-dependent Clp protease adapter protein ClpS</fullName>
    </recommendedName>
</protein>
<accession>Q0SGS7</accession>
<sequence>MAHCSTTAPFVDAMPASPQVTPAESEVVEIDEANDRPWVTVVWDDPVNLMHYVTYIFQKLFGYSKAKATELMMQVHSEGKAVVSSGSRDKVENDVRKLHAAGLWATMQHDGS</sequence>
<organism>
    <name type="scientific">Rhodococcus jostii (strain RHA1)</name>
    <dbReference type="NCBI Taxonomy" id="101510"/>
    <lineage>
        <taxon>Bacteria</taxon>
        <taxon>Bacillati</taxon>
        <taxon>Actinomycetota</taxon>
        <taxon>Actinomycetes</taxon>
        <taxon>Mycobacteriales</taxon>
        <taxon>Nocardiaceae</taxon>
        <taxon>Rhodococcus</taxon>
    </lineage>
</organism>